<keyword id="KW-0687">Ribonucleoprotein</keyword>
<keyword id="KW-0689">Ribosomal protein</keyword>
<keyword id="KW-0694">RNA-binding</keyword>
<keyword id="KW-0699">rRNA-binding</keyword>
<accession>Q3K611</accession>
<reference key="1">
    <citation type="journal article" date="2009" name="Genome Biol.">
        <title>Genomic and genetic analyses of diversity and plant interactions of Pseudomonas fluorescens.</title>
        <authorList>
            <person name="Silby M.W."/>
            <person name="Cerdeno-Tarraga A.M."/>
            <person name="Vernikos G.S."/>
            <person name="Giddens S.R."/>
            <person name="Jackson R.W."/>
            <person name="Preston G.M."/>
            <person name="Zhang X.-X."/>
            <person name="Moon C.D."/>
            <person name="Gehrig S.M."/>
            <person name="Godfrey S.A.C."/>
            <person name="Knight C.G."/>
            <person name="Malone J.G."/>
            <person name="Robinson Z."/>
            <person name="Spiers A.J."/>
            <person name="Harris S."/>
            <person name="Challis G.L."/>
            <person name="Yaxley A.M."/>
            <person name="Harris D."/>
            <person name="Seeger K."/>
            <person name="Murphy L."/>
            <person name="Rutter S."/>
            <person name="Squares R."/>
            <person name="Quail M.A."/>
            <person name="Saunders E."/>
            <person name="Mavromatis K."/>
            <person name="Brettin T.S."/>
            <person name="Bentley S.D."/>
            <person name="Hothersall J."/>
            <person name="Stephens E."/>
            <person name="Thomas C.M."/>
            <person name="Parkhill J."/>
            <person name="Levy S.B."/>
            <person name="Rainey P.B."/>
            <person name="Thomson N.R."/>
        </authorList>
    </citation>
    <scope>NUCLEOTIDE SEQUENCE [LARGE SCALE GENOMIC DNA]</scope>
    <source>
        <strain>Pf0-1</strain>
    </source>
</reference>
<feature type="chain" id="PRO_0000228915" description="Small ribosomal subunit protein uS4">
    <location>
        <begin position="1"/>
        <end position="206"/>
    </location>
</feature>
<feature type="domain" description="S4 RNA-binding" evidence="1">
    <location>
        <begin position="96"/>
        <end position="156"/>
    </location>
</feature>
<organism>
    <name type="scientific">Pseudomonas fluorescens (strain Pf0-1)</name>
    <dbReference type="NCBI Taxonomy" id="205922"/>
    <lineage>
        <taxon>Bacteria</taxon>
        <taxon>Pseudomonadati</taxon>
        <taxon>Pseudomonadota</taxon>
        <taxon>Gammaproteobacteria</taxon>
        <taxon>Pseudomonadales</taxon>
        <taxon>Pseudomonadaceae</taxon>
        <taxon>Pseudomonas</taxon>
    </lineage>
</organism>
<comment type="function">
    <text evidence="1">One of the primary rRNA binding proteins, it binds directly to 16S rRNA where it nucleates assembly of the body of the 30S subunit.</text>
</comment>
<comment type="function">
    <text evidence="1">With S5 and S12 plays an important role in translational accuracy.</text>
</comment>
<comment type="subunit">
    <text evidence="1">Part of the 30S ribosomal subunit. Contacts protein S5. The interaction surface between S4 and S5 is involved in control of translational fidelity.</text>
</comment>
<comment type="similarity">
    <text evidence="1">Belongs to the universal ribosomal protein uS4 family.</text>
</comment>
<proteinExistence type="inferred from homology"/>
<sequence length="206" mass="23032">MARYIGPKCKLARREGTDLFLKSGVRAIESKCNIEAAPGIHGQRRGRQSDYGTQLREKQKVRRIYGVLERQFSGYYKAAASKKGATGENLLQLLECRLDNVVYRMGFGSTRAESRQLVSHKSISVNGQTVNVPSYQVRAGDVVAVREKAKNQLRIVQALELCAQRGRVEWVEVDAEKKSGVFKNVPARSDLSADINESLIVELYSK</sequence>
<gene>
    <name evidence="1" type="primary">rpsD</name>
    <name type="ordered locus">Pfl01_5056</name>
</gene>
<evidence type="ECO:0000255" key="1">
    <source>
        <dbReference type="HAMAP-Rule" id="MF_01306"/>
    </source>
</evidence>
<evidence type="ECO:0000305" key="2"/>
<protein>
    <recommendedName>
        <fullName evidence="1">Small ribosomal subunit protein uS4</fullName>
    </recommendedName>
    <alternativeName>
        <fullName evidence="2">30S ribosomal protein S4</fullName>
    </alternativeName>
</protein>
<name>RS4_PSEPF</name>
<dbReference type="EMBL" id="CP000094">
    <property type="protein sequence ID" value="ABA76793.1"/>
    <property type="molecule type" value="Genomic_DNA"/>
</dbReference>
<dbReference type="RefSeq" id="WP_011336168.1">
    <property type="nucleotide sequence ID" value="NC_007492.2"/>
</dbReference>
<dbReference type="SMR" id="Q3K611"/>
<dbReference type="KEGG" id="pfo:Pfl01_5056"/>
<dbReference type="eggNOG" id="COG0522">
    <property type="taxonomic scope" value="Bacteria"/>
</dbReference>
<dbReference type="HOGENOM" id="CLU_092403_0_2_6"/>
<dbReference type="Proteomes" id="UP000002704">
    <property type="component" value="Chromosome"/>
</dbReference>
<dbReference type="GO" id="GO:0015935">
    <property type="term" value="C:small ribosomal subunit"/>
    <property type="evidence" value="ECO:0007669"/>
    <property type="project" value="InterPro"/>
</dbReference>
<dbReference type="GO" id="GO:0019843">
    <property type="term" value="F:rRNA binding"/>
    <property type="evidence" value="ECO:0007669"/>
    <property type="project" value="UniProtKB-UniRule"/>
</dbReference>
<dbReference type="GO" id="GO:0003735">
    <property type="term" value="F:structural constituent of ribosome"/>
    <property type="evidence" value="ECO:0007669"/>
    <property type="project" value="InterPro"/>
</dbReference>
<dbReference type="GO" id="GO:0042274">
    <property type="term" value="P:ribosomal small subunit biogenesis"/>
    <property type="evidence" value="ECO:0007669"/>
    <property type="project" value="TreeGrafter"/>
</dbReference>
<dbReference type="GO" id="GO:0006412">
    <property type="term" value="P:translation"/>
    <property type="evidence" value="ECO:0007669"/>
    <property type="project" value="UniProtKB-UniRule"/>
</dbReference>
<dbReference type="CDD" id="cd00165">
    <property type="entry name" value="S4"/>
    <property type="match status" value="1"/>
</dbReference>
<dbReference type="FunFam" id="1.10.1050.10:FF:000001">
    <property type="entry name" value="30S ribosomal protein S4"/>
    <property type="match status" value="1"/>
</dbReference>
<dbReference type="FunFam" id="3.10.290.10:FF:000001">
    <property type="entry name" value="30S ribosomal protein S4"/>
    <property type="match status" value="1"/>
</dbReference>
<dbReference type="Gene3D" id="1.10.1050.10">
    <property type="entry name" value="Ribosomal Protein S4 Delta 41, Chain A, domain 1"/>
    <property type="match status" value="1"/>
</dbReference>
<dbReference type="Gene3D" id="3.10.290.10">
    <property type="entry name" value="RNA-binding S4 domain"/>
    <property type="match status" value="1"/>
</dbReference>
<dbReference type="HAMAP" id="MF_01306_B">
    <property type="entry name" value="Ribosomal_uS4_B"/>
    <property type="match status" value="1"/>
</dbReference>
<dbReference type="InterPro" id="IPR022801">
    <property type="entry name" value="Ribosomal_uS4"/>
</dbReference>
<dbReference type="InterPro" id="IPR005709">
    <property type="entry name" value="Ribosomal_uS4_bac-type"/>
</dbReference>
<dbReference type="InterPro" id="IPR018079">
    <property type="entry name" value="Ribosomal_uS4_CS"/>
</dbReference>
<dbReference type="InterPro" id="IPR001912">
    <property type="entry name" value="Ribosomal_uS4_N"/>
</dbReference>
<dbReference type="InterPro" id="IPR002942">
    <property type="entry name" value="S4_RNA-bd"/>
</dbReference>
<dbReference type="InterPro" id="IPR036986">
    <property type="entry name" value="S4_RNA-bd_sf"/>
</dbReference>
<dbReference type="NCBIfam" id="NF003717">
    <property type="entry name" value="PRK05327.1"/>
    <property type="match status" value="1"/>
</dbReference>
<dbReference type="NCBIfam" id="TIGR01017">
    <property type="entry name" value="rpsD_bact"/>
    <property type="match status" value="1"/>
</dbReference>
<dbReference type="PANTHER" id="PTHR11831">
    <property type="entry name" value="30S 40S RIBOSOMAL PROTEIN"/>
    <property type="match status" value="1"/>
</dbReference>
<dbReference type="PANTHER" id="PTHR11831:SF4">
    <property type="entry name" value="SMALL RIBOSOMAL SUBUNIT PROTEIN US4M"/>
    <property type="match status" value="1"/>
</dbReference>
<dbReference type="Pfam" id="PF00163">
    <property type="entry name" value="Ribosomal_S4"/>
    <property type="match status" value="1"/>
</dbReference>
<dbReference type="Pfam" id="PF01479">
    <property type="entry name" value="S4"/>
    <property type="match status" value="1"/>
</dbReference>
<dbReference type="SMART" id="SM01390">
    <property type="entry name" value="Ribosomal_S4"/>
    <property type="match status" value="1"/>
</dbReference>
<dbReference type="SMART" id="SM00363">
    <property type="entry name" value="S4"/>
    <property type="match status" value="1"/>
</dbReference>
<dbReference type="SUPFAM" id="SSF55174">
    <property type="entry name" value="Alpha-L RNA-binding motif"/>
    <property type="match status" value="1"/>
</dbReference>
<dbReference type="PROSITE" id="PS00632">
    <property type="entry name" value="RIBOSOMAL_S4"/>
    <property type="match status" value="1"/>
</dbReference>
<dbReference type="PROSITE" id="PS50889">
    <property type="entry name" value="S4"/>
    <property type="match status" value="1"/>
</dbReference>